<evidence type="ECO:0000255" key="1"/>
<evidence type="ECO:0000269" key="2">
    <source>
    </source>
</evidence>
<evidence type="ECO:0000269" key="3">
    <source>
    </source>
</evidence>
<evidence type="ECO:0000305" key="4"/>
<sequence>MAPAQNQITSKHVAVIGAGPAGLITSRELRREGHSVVVFEREKQVGGLWVYTPKSDSDPLSLDPTRSKVHSSIYESLRTNVPRESMGVRDFPFLPRFDDESRDARRYPNHREVLAYIQDFAREFKIEEMIRFETEVVRVEPVDNGNWRVQSKNSGGFLEDEIYDAVVVCNGHYTEPNIAHIPGIKSWPGKQIHSHNYRVPDPFENEVVVVIGNFASGADISRDIAKVAKEVHIASRAREPHTYEKISVPQNNLWMHSEIDTTHEDGSIVFKNGKVIFADSIVYCTGYKYNFPFLETNGYLRIDEKRVEPLYKHVFPPALAPGLAFVGLPAMGIVFVMFEIQSKWVAAVLSGRVTLPSTDKMMEDINAWYASLDALGIPKRHTHTIGRIQSEYLNWVAKESGCELVERWRGQEVDGGYLRLVAHPETYRDEWDDDELIEEAYNDFSRKKLISVDPSYYLENGR</sequence>
<feature type="chain" id="PRO_0000360993" description="Flavin-containing monooxygenase FMO GS-OX3">
    <location>
        <begin position="1"/>
        <end position="462"/>
    </location>
</feature>
<feature type="transmembrane region" description="Helical" evidence="1">
    <location>
        <begin position="318"/>
        <end position="338"/>
    </location>
</feature>
<feature type="binding site" evidence="1">
    <location>
        <begin position="17"/>
        <end position="22"/>
    </location>
    <ligand>
        <name>FAD</name>
        <dbReference type="ChEBI" id="CHEBI:57692"/>
    </ligand>
</feature>
<feature type="binding site" evidence="1">
    <location>
        <begin position="212"/>
        <end position="217"/>
    </location>
    <ligand>
        <name>NADP(+)</name>
        <dbReference type="ChEBI" id="CHEBI:58349"/>
    </ligand>
</feature>
<name>GSOX3_ARATH</name>
<gene>
    <name type="primary">FMOGS-OX3</name>
    <name type="ordered locus">At1g62560</name>
    <name type="ORF">T3P18.12</name>
</gene>
<accession>Q9SXE1</accession>
<dbReference type="EC" id="1.14.13.237" evidence="3"/>
<dbReference type="EMBL" id="AC005698">
    <property type="protein sequence ID" value="AAD43613.1"/>
    <property type="molecule type" value="Genomic_DNA"/>
</dbReference>
<dbReference type="EMBL" id="CP002684">
    <property type="protein sequence ID" value="AEE33978.1"/>
    <property type="molecule type" value="Genomic_DNA"/>
</dbReference>
<dbReference type="EMBL" id="AF370136">
    <property type="protein sequence ID" value="AAK43951.1"/>
    <property type="molecule type" value="mRNA"/>
</dbReference>
<dbReference type="EMBL" id="AY113858">
    <property type="protein sequence ID" value="AAM44906.1"/>
    <property type="molecule type" value="mRNA"/>
</dbReference>
<dbReference type="SMR" id="Q9SXE1"/>
<dbReference type="BioGRID" id="27774">
    <property type="interactions" value="1"/>
</dbReference>
<dbReference type="FunCoup" id="Q9SXE1">
    <property type="interactions" value="526"/>
</dbReference>
<dbReference type="IntAct" id="Q9SXE1">
    <property type="interactions" value="1"/>
</dbReference>
<dbReference type="STRING" id="3702.Q9SXE1"/>
<dbReference type="iPTMnet" id="Q9SXE1"/>
<dbReference type="PaxDb" id="3702-AT1G62560.1"/>
<dbReference type="ProteomicsDB" id="247257"/>
<dbReference type="EnsemblPlants" id="AT1G62560.1">
    <property type="protein sequence ID" value="AT1G62560.1"/>
    <property type="gene ID" value="AT1G62560"/>
</dbReference>
<dbReference type="GeneID" id="842553"/>
<dbReference type="Gramene" id="AT1G62560.1">
    <property type="protein sequence ID" value="AT1G62560.1"/>
    <property type="gene ID" value="AT1G62560"/>
</dbReference>
<dbReference type="KEGG" id="ath:AT1G62560"/>
<dbReference type="Araport" id="AT1G62560"/>
<dbReference type="TAIR" id="AT1G62560">
    <property type="gene designation" value="FMO GS-OX3"/>
</dbReference>
<dbReference type="eggNOG" id="KOG1399">
    <property type="taxonomic scope" value="Eukaryota"/>
</dbReference>
<dbReference type="HOGENOM" id="CLU_006909_3_0_1"/>
<dbReference type="InParanoid" id="Q9SXE1"/>
<dbReference type="OMA" id="ADPPALM"/>
<dbReference type="PhylomeDB" id="Q9SXE1"/>
<dbReference type="BioCyc" id="MetaCyc:AT1G62560-MONOMER"/>
<dbReference type="BRENDA" id="1.14.13.237">
    <property type="organism ID" value="399"/>
</dbReference>
<dbReference type="PRO" id="PR:Q9SXE1"/>
<dbReference type="Proteomes" id="UP000006548">
    <property type="component" value="Chromosome 1"/>
</dbReference>
<dbReference type="ExpressionAtlas" id="Q9SXE1">
    <property type="expression patterns" value="baseline and differential"/>
</dbReference>
<dbReference type="GO" id="GO:0016020">
    <property type="term" value="C:membrane"/>
    <property type="evidence" value="ECO:0007669"/>
    <property type="project" value="UniProtKB-SubCell"/>
</dbReference>
<dbReference type="GO" id="GO:0080102">
    <property type="term" value="F:3-methylthiopropyl glucosinolate S-oxygenase activity"/>
    <property type="evidence" value="ECO:0000315"/>
    <property type="project" value="TAIR"/>
</dbReference>
<dbReference type="GO" id="GO:0080103">
    <property type="term" value="F:4-methylthiopropyl glucosinolate S-oxygenase activity"/>
    <property type="evidence" value="ECO:0000314"/>
    <property type="project" value="TAIR"/>
</dbReference>
<dbReference type="GO" id="GO:0080104">
    <property type="term" value="F:5-methylthiopropyl glucosinolate S-oxygenase activity"/>
    <property type="evidence" value="ECO:0000315"/>
    <property type="project" value="TAIR"/>
</dbReference>
<dbReference type="GO" id="GO:0080105">
    <property type="term" value="F:6-methylthiopropyl glucosinolate S-oxygenase activity"/>
    <property type="evidence" value="ECO:0000315"/>
    <property type="project" value="TAIR"/>
</dbReference>
<dbReference type="GO" id="GO:0080106">
    <property type="term" value="F:7-methylthiopropyl glucosinolate S-oxygenase activity"/>
    <property type="evidence" value="ECO:0000315"/>
    <property type="project" value="TAIR"/>
</dbReference>
<dbReference type="GO" id="GO:0080107">
    <property type="term" value="F:8-methylthiopropyl glucosinolate S-oxygenase activity"/>
    <property type="evidence" value="ECO:0000314"/>
    <property type="project" value="TAIR"/>
</dbReference>
<dbReference type="GO" id="GO:0050660">
    <property type="term" value="F:flavin adenine dinucleotide binding"/>
    <property type="evidence" value="ECO:0007669"/>
    <property type="project" value="InterPro"/>
</dbReference>
<dbReference type="GO" id="GO:0004499">
    <property type="term" value="F:N,N-dimethylaniline monooxygenase activity"/>
    <property type="evidence" value="ECO:0000314"/>
    <property type="project" value="TAIR"/>
</dbReference>
<dbReference type="GO" id="GO:0050661">
    <property type="term" value="F:NADP binding"/>
    <property type="evidence" value="ECO:0007669"/>
    <property type="project" value="InterPro"/>
</dbReference>
<dbReference type="GO" id="GO:0019761">
    <property type="term" value="P:glucosinolate biosynthetic process"/>
    <property type="evidence" value="ECO:0000315"/>
    <property type="project" value="TAIR"/>
</dbReference>
<dbReference type="FunFam" id="3.50.50.60:FF:000099">
    <property type="entry name" value="Flavin-containing monooxygenase"/>
    <property type="match status" value="1"/>
</dbReference>
<dbReference type="Gene3D" id="3.50.50.60">
    <property type="entry name" value="FAD/NAD(P)-binding domain"/>
    <property type="match status" value="2"/>
</dbReference>
<dbReference type="InterPro" id="IPR036188">
    <property type="entry name" value="FAD/NAD-bd_sf"/>
</dbReference>
<dbReference type="InterPro" id="IPR000960">
    <property type="entry name" value="Flavin_mOase"/>
</dbReference>
<dbReference type="InterPro" id="IPR020946">
    <property type="entry name" value="Flavin_mOase-like"/>
</dbReference>
<dbReference type="InterPro" id="IPR050346">
    <property type="entry name" value="FMO-like"/>
</dbReference>
<dbReference type="PANTHER" id="PTHR23023">
    <property type="entry name" value="DIMETHYLANILINE MONOOXYGENASE"/>
    <property type="match status" value="1"/>
</dbReference>
<dbReference type="Pfam" id="PF00743">
    <property type="entry name" value="FMO-like"/>
    <property type="match status" value="2"/>
</dbReference>
<dbReference type="PIRSF" id="PIRSF000332">
    <property type="entry name" value="FMO"/>
    <property type="match status" value="1"/>
</dbReference>
<dbReference type="PRINTS" id="PR00370">
    <property type="entry name" value="FMOXYGENASE"/>
</dbReference>
<dbReference type="SUPFAM" id="SSF51905">
    <property type="entry name" value="FAD/NAD(P)-binding domain"/>
    <property type="match status" value="2"/>
</dbReference>
<reference key="1">
    <citation type="journal article" date="2000" name="Nature">
        <title>Sequence and analysis of chromosome 1 of the plant Arabidopsis thaliana.</title>
        <authorList>
            <person name="Theologis A."/>
            <person name="Ecker J.R."/>
            <person name="Palm C.J."/>
            <person name="Federspiel N.A."/>
            <person name="Kaul S."/>
            <person name="White O."/>
            <person name="Alonso J."/>
            <person name="Altafi H."/>
            <person name="Araujo R."/>
            <person name="Bowman C.L."/>
            <person name="Brooks S.Y."/>
            <person name="Buehler E."/>
            <person name="Chan A."/>
            <person name="Chao Q."/>
            <person name="Chen H."/>
            <person name="Cheuk R.F."/>
            <person name="Chin C.W."/>
            <person name="Chung M.K."/>
            <person name="Conn L."/>
            <person name="Conway A.B."/>
            <person name="Conway A.R."/>
            <person name="Creasy T.H."/>
            <person name="Dewar K."/>
            <person name="Dunn P."/>
            <person name="Etgu P."/>
            <person name="Feldblyum T.V."/>
            <person name="Feng J.-D."/>
            <person name="Fong B."/>
            <person name="Fujii C.Y."/>
            <person name="Gill J.E."/>
            <person name="Goldsmith A.D."/>
            <person name="Haas B."/>
            <person name="Hansen N.F."/>
            <person name="Hughes B."/>
            <person name="Huizar L."/>
            <person name="Hunter J.L."/>
            <person name="Jenkins J."/>
            <person name="Johnson-Hopson C."/>
            <person name="Khan S."/>
            <person name="Khaykin E."/>
            <person name="Kim C.J."/>
            <person name="Koo H.L."/>
            <person name="Kremenetskaia I."/>
            <person name="Kurtz D.B."/>
            <person name="Kwan A."/>
            <person name="Lam B."/>
            <person name="Langin-Hooper S."/>
            <person name="Lee A."/>
            <person name="Lee J.M."/>
            <person name="Lenz C.A."/>
            <person name="Li J.H."/>
            <person name="Li Y.-P."/>
            <person name="Lin X."/>
            <person name="Liu S.X."/>
            <person name="Liu Z.A."/>
            <person name="Luros J.S."/>
            <person name="Maiti R."/>
            <person name="Marziali A."/>
            <person name="Militscher J."/>
            <person name="Miranda M."/>
            <person name="Nguyen M."/>
            <person name="Nierman W.C."/>
            <person name="Osborne B.I."/>
            <person name="Pai G."/>
            <person name="Peterson J."/>
            <person name="Pham P.K."/>
            <person name="Rizzo M."/>
            <person name="Rooney T."/>
            <person name="Rowley D."/>
            <person name="Sakano H."/>
            <person name="Salzberg S.L."/>
            <person name="Schwartz J.R."/>
            <person name="Shinn P."/>
            <person name="Southwick A.M."/>
            <person name="Sun H."/>
            <person name="Tallon L.J."/>
            <person name="Tambunga G."/>
            <person name="Toriumi M.J."/>
            <person name="Town C.D."/>
            <person name="Utterback T."/>
            <person name="Van Aken S."/>
            <person name="Vaysberg M."/>
            <person name="Vysotskaia V.S."/>
            <person name="Walker M."/>
            <person name="Wu D."/>
            <person name="Yu G."/>
            <person name="Fraser C.M."/>
            <person name="Venter J.C."/>
            <person name="Davis R.W."/>
        </authorList>
    </citation>
    <scope>NUCLEOTIDE SEQUENCE [LARGE SCALE GENOMIC DNA]</scope>
    <source>
        <strain>cv. Columbia</strain>
    </source>
</reference>
<reference key="2">
    <citation type="journal article" date="2017" name="Plant J.">
        <title>Araport11: a complete reannotation of the Arabidopsis thaliana reference genome.</title>
        <authorList>
            <person name="Cheng C.Y."/>
            <person name="Krishnakumar V."/>
            <person name="Chan A.P."/>
            <person name="Thibaud-Nissen F."/>
            <person name="Schobel S."/>
            <person name="Town C.D."/>
        </authorList>
    </citation>
    <scope>GENOME REANNOTATION</scope>
    <source>
        <strain>cv. Columbia</strain>
    </source>
</reference>
<reference key="3">
    <citation type="journal article" date="2003" name="Science">
        <title>Empirical analysis of transcriptional activity in the Arabidopsis genome.</title>
        <authorList>
            <person name="Yamada K."/>
            <person name="Lim J."/>
            <person name="Dale J.M."/>
            <person name="Chen H."/>
            <person name="Shinn P."/>
            <person name="Palm C.J."/>
            <person name="Southwick A.M."/>
            <person name="Wu H.C."/>
            <person name="Kim C.J."/>
            <person name="Nguyen M."/>
            <person name="Pham P.K."/>
            <person name="Cheuk R.F."/>
            <person name="Karlin-Newmann G."/>
            <person name="Liu S.X."/>
            <person name="Lam B."/>
            <person name="Sakano H."/>
            <person name="Wu T."/>
            <person name="Yu G."/>
            <person name="Miranda M."/>
            <person name="Quach H.L."/>
            <person name="Tripp M."/>
            <person name="Chang C.H."/>
            <person name="Lee J.M."/>
            <person name="Toriumi M.J."/>
            <person name="Chan M.M."/>
            <person name="Tang C.C."/>
            <person name="Onodera C.S."/>
            <person name="Deng J.M."/>
            <person name="Akiyama K."/>
            <person name="Ansari Y."/>
            <person name="Arakawa T."/>
            <person name="Banh J."/>
            <person name="Banno F."/>
            <person name="Bowser L."/>
            <person name="Brooks S.Y."/>
            <person name="Carninci P."/>
            <person name="Chao Q."/>
            <person name="Choy N."/>
            <person name="Enju A."/>
            <person name="Goldsmith A.D."/>
            <person name="Gurjal M."/>
            <person name="Hansen N.F."/>
            <person name="Hayashizaki Y."/>
            <person name="Johnson-Hopson C."/>
            <person name="Hsuan V.W."/>
            <person name="Iida K."/>
            <person name="Karnes M."/>
            <person name="Khan S."/>
            <person name="Koesema E."/>
            <person name="Ishida J."/>
            <person name="Jiang P.X."/>
            <person name="Jones T."/>
            <person name="Kawai J."/>
            <person name="Kamiya A."/>
            <person name="Meyers C."/>
            <person name="Nakajima M."/>
            <person name="Narusaka M."/>
            <person name="Seki M."/>
            <person name="Sakurai T."/>
            <person name="Satou M."/>
            <person name="Tamse R."/>
            <person name="Vaysberg M."/>
            <person name="Wallender E.K."/>
            <person name="Wong C."/>
            <person name="Yamamura Y."/>
            <person name="Yuan S."/>
            <person name="Shinozaki K."/>
            <person name="Davis R.W."/>
            <person name="Theologis A."/>
            <person name="Ecker J.R."/>
        </authorList>
    </citation>
    <scope>NUCLEOTIDE SEQUENCE [LARGE SCALE MRNA]</scope>
    <source>
        <strain>cv. Columbia</strain>
    </source>
</reference>
<reference key="4">
    <citation type="journal article" date="2004" name="Plant Physiol.">
        <title>Comprehensive comparison of auxin-regulated and brassinosteroid-regulated genes in Arabidopsis.</title>
        <authorList>
            <person name="Goda H."/>
            <person name="Sawa S."/>
            <person name="Asami T."/>
            <person name="Fujioka S."/>
            <person name="Shimada Y."/>
            <person name="Yoshida S."/>
        </authorList>
    </citation>
    <scope>INDUCTION BY AUXIN</scope>
</reference>
<reference key="5">
    <citation type="journal article" date="2007" name="Plant J.">
        <title>Identification of a flavin-monooxygenase as the S-oxygenating enzyme in aliphatic glucosinolate biosynthesis in Arabidopsis.</title>
        <authorList>
            <person name="Hansen B.G."/>
            <person name="Kliebenstein D.J."/>
            <person name="Halkier B.A."/>
        </authorList>
    </citation>
    <scope>GENE FAMILY</scope>
    <source>
        <strain>cv. Columbia</strain>
    </source>
</reference>
<reference key="6">
    <citation type="journal article" date="2008" name="Plant Physiol.">
        <title>Subclade of flavin-monooxygenases involved in aliphatic glucosinolate biosynthesis.</title>
        <authorList>
            <person name="Li J."/>
            <person name="Hansen B.G."/>
            <person name="Ober J.A."/>
            <person name="Kliebenstein D.J."/>
            <person name="Halkier B.A."/>
        </authorList>
    </citation>
    <scope>FUNCTION</scope>
    <scope>CATALYTIC ACTIVITY</scope>
    <scope>DISRUPTION PHENOTYPE</scope>
    <source>
        <strain>cv. Landsberg erecta</strain>
    </source>
</reference>
<organism>
    <name type="scientific">Arabidopsis thaliana</name>
    <name type="common">Mouse-ear cress</name>
    <dbReference type="NCBI Taxonomy" id="3702"/>
    <lineage>
        <taxon>Eukaryota</taxon>
        <taxon>Viridiplantae</taxon>
        <taxon>Streptophyta</taxon>
        <taxon>Embryophyta</taxon>
        <taxon>Tracheophyta</taxon>
        <taxon>Spermatophyta</taxon>
        <taxon>Magnoliopsida</taxon>
        <taxon>eudicotyledons</taxon>
        <taxon>Gunneridae</taxon>
        <taxon>Pentapetalae</taxon>
        <taxon>rosids</taxon>
        <taxon>malvids</taxon>
        <taxon>Brassicales</taxon>
        <taxon>Brassicaceae</taxon>
        <taxon>Camelineae</taxon>
        <taxon>Arabidopsis</taxon>
    </lineage>
</organism>
<protein>
    <recommendedName>
        <fullName>Flavin-containing monooxygenase FMO GS-OX3</fullName>
        <ecNumber evidence="3">1.14.13.237</ecNumber>
    </recommendedName>
    <alternativeName>
        <fullName>Flavin-monooxygenase glucosinolate S-oxygenase 3</fullName>
    </alternativeName>
</protein>
<proteinExistence type="evidence at protein level"/>
<keyword id="KW-0274">FAD</keyword>
<keyword id="KW-0285">Flavoprotein</keyword>
<keyword id="KW-0472">Membrane</keyword>
<keyword id="KW-0503">Monooxygenase</keyword>
<keyword id="KW-0521">NADP</keyword>
<keyword id="KW-0560">Oxidoreductase</keyword>
<keyword id="KW-1185">Reference proteome</keyword>
<keyword id="KW-0812">Transmembrane</keyword>
<keyword id="KW-1133">Transmembrane helix</keyword>
<comment type="function">
    <text evidence="3">Catalyzes the conversion of methylthioalkyl glucosinolates of any chain length into methylsulfinylalkyl glucosinolates. Prefers probably short-chain methylthioalkyl glucosinolates in cv. Landsberg erecta.</text>
</comment>
<comment type="catalytic activity">
    <reaction evidence="3">
        <text>a (Z)-omega-(methylsulfanyl)-N-sulfo-alkylhydroximate S-glucoside + NADPH + O2 + H(+) = a (Z)-omega-(methylsulfinyl)-alkyl-glucosinolate + NADP(+) + H2O</text>
        <dbReference type="Rhea" id="RHEA:42208"/>
        <dbReference type="Rhea" id="RHEA-COMP:13194"/>
        <dbReference type="Rhea" id="RHEA-COMP:13195"/>
        <dbReference type="ChEBI" id="CHEBI:15377"/>
        <dbReference type="ChEBI" id="CHEBI:15378"/>
        <dbReference type="ChEBI" id="CHEBI:15379"/>
        <dbReference type="ChEBI" id="CHEBI:57783"/>
        <dbReference type="ChEBI" id="CHEBI:58349"/>
        <dbReference type="ChEBI" id="CHEBI:136434"/>
        <dbReference type="ChEBI" id="CHEBI:136435"/>
        <dbReference type="EC" id="1.14.13.237"/>
    </reaction>
</comment>
<comment type="subcellular location">
    <subcellularLocation>
        <location evidence="4">Membrane</location>
        <topology evidence="4">Single-pass membrane protein</topology>
    </subcellularLocation>
</comment>
<comment type="induction">
    <text evidence="2">Down-regulated at late stage by auxin.</text>
</comment>
<comment type="disruption phenotype">
    <text evidence="3">Increased accumulation of methylthiopropyl glucosinolates in leaves and seeds.</text>
</comment>
<comment type="miscellaneous">
    <text>In contrast to cv. Columbia, cv. Landsberg erecta has predominantly propyl C3 instead of butyl C4 Met-derived glucosinolates.</text>
</comment>
<comment type="similarity">
    <text evidence="4">Belongs to the FMO family.</text>
</comment>